<gene>
    <name evidence="10 13" type="primary">MBTD1</name>
</gene>
<accession>Q05BQ5</accession>
<accession>Q6ZVU7</accession>
<accession>Q9NXU1</accession>
<comment type="function">
    <text evidence="4 6 7">Chromatin reader component of the NuA4 histone acetyltransferase complex, a multiprotein complex involved in transcriptional activation of select genes principally by acetylation of nucleosomal histones H4 and H2A (PubMed:27153538, PubMed:32209463). The NuA4 complex plays a direct role in repair of DNA double-strand breaks (DSBs) by promoting homologous recombination (HR) (PubMed:27153538). MBTD1 specifically recognizes and binds monomethylated and dimethylated 'Lys-20' on histone H4 (H4K20me1 and H4K20me2, respectively) (PubMed:19841675, PubMed:27153538, PubMed:32209463). In the NuA4 complex, MBTD1 promotes recruitment of the complex to H4K20me marks by competing with TP53BP1 for binding to H4K20me (PubMed:27153538). Following recruitment to H4K20me at DNA breaks, the NuA4 complex catalyzes acetylation of 'Lys-15' on histone H2A (H2AK15), blocking the ubiquitination mark required for TP53BP1 localization at DNA breaks, thereby promoting homologous recombination (HR) (PubMed:27153538).</text>
</comment>
<comment type="subunit">
    <text evidence="4 6 7">Monomer (PubMed:19841675). Component of the NuA4 histone acetyltransferase complex (PubMed:27153538, PubMed:32209463). Interacts with EPC1; interaction is direct and promotes recruitment of MBTD1 into the NuA4 histone acetyltransferase complex (PubMed:32209463).</text>
</comment>
<comment type="interaction">
    <interactant intactId="EBI-5666902">
        <id>Q05BQ5</id>
    </interactant>
    <interactant intactId="EBI-769270">
        <id>Q9H2F5</id>
        <label>EPC1</label>
    </interactant>
    <organismsDiffer>false</organismsDiffer>
    <experiments>6</experiments>
</comment>
<comment type="interaction">
    <interactant intactId="EBI-5666902">
        <id>Q05BQ5</id>
    </interactant>
    <interactant intactId="EBI-302023">
        <id>P62805</id>
        <label>H4C9</label>
    </interactant>
    <organismsDiffer>false</organismsDiffer>
    <experiments>3</experiments>
</comment>
<comment type="subcellular location">
    <subcellularLocation>
        <location evidence="12">Nucleus</location>
    </subcellularLocation>
    <subcellularLocation>
        <location evidence="6">Chromosome</location>
    </subcellularLocation>
</comment>
<comment type="alternative products">
    <event type="alternative splicing"/>
    <isoform>
        <id>Q05BQ5-1</id>
        <name>1</name>
        <sequence type="displayed"/>
    </isoform>
    <isoform>
        <id>Q05BQ5-2</id>
        <name>2</name>
        <sequence type="described" ref="VSP_042701 VSP_042702"/>
    </isoform>
    <isoform>
        <id>Q05BQ5-3</id>
        <name>3</name>
        <sequence type="described" ref="VSP_030115 VSP_030118"/>
    </isoform>
</comment>
<comment type="disease">
    <text evidence="5">A chromosomal aberration involving MBTD1 is a cause of acute poorly differentiated myeloid leukemia. Translocation (10;17)(p15;q21) with ZMYND11.</text>
</comment>
<comment type="miscellaneous">
    <molecule>Isoform 2</molecule>
    <text evidence="11">May be produced at very low levels due to a premature stop codon in the mRNA, leading to nonsense-mediated mRNA decay.</text>
</comment>
<comment type="sequence caution" evidence="11">
    <conflict type="erroneous translation">
        <sequence resource="EMBL-CDS" id="BAC85763"/>
    </conflict>
    <text>Wrong choice of frame.</text>
</comment>
<reference key="1">
    <citation type="journal article" date="2004" name="Nat. Genet.">
        <title>Complete sequencing and characterization of 21,243 full-length human cDNAs.</title>
        <authorList>
            <person name="Ota T."/>
            <person name="Suzuki Y."/>
            <person name="Nishikawa T."/>
            <person name="Otsuki T."/>
            <person name="Sugiyama T."/>
            <person name="Irie R."/>
            <person name="Wakamatsu A."/>
            <person name="Hayashi K."/>
            <person name="Sato H."/>
            <person name="Nagai K."/>
            <person name="Kimura K."/>
            <person name="Makita H."/>
            <person name="Sekine M."/>
            <person name="Obayashi M."/>
            <person name="Nishi T."/>
            <person name="Shibahara T."/>
            <person name="Tanaka T."/>
            <person name="Ishii S."/>
            <person name="Yamamoto J."/>
            <person name="Saito K."/>
            <person name="Kawai Y."/>
            <person name="Isono Y."/>
            <person name="Nakamura Y."/>
            <person name="Nagahari K."/>
            <person name="Murakami K."/>
            <person name="Yasuda T."/>
            <person name="Iwayanagi T."/>
            <person name="Wagatsuma M."/>
            <person name="Shiratori A."/>
            <person name="Sudo H."/>
            <person name="Hosoiri T."/>
            <person name="Kaku Y."/>
            <person name="Kodaira H."/>
            <person name="Kondo H."/>
            <person name="Sugawara M."/>
            <person name="Takahashi M."/>
            <person name="Kanda K."/>
            <person name="Yokoi T."/>
            <person name="Furuya T."/>
            <person name="Kikkawa E."/>
            <person name="Omura Y."/>
            <person name="Abe K."/>
            <person name="Kamihara K."/>
            <person name="Katsuta N."/>
            <person name="Sato K."/>
            <person name="Tanikawa M."/>
            <person name="Yamazaki M."/>
            <person name="Ninomiya K."/>
            <person name="Ishibashi T."/>
            <person name="Yamashita H."/>
            <person name="Murakawa K."/>
            <person name="Fujimori K."/>
            <person name="Tanai H."/>
            <person name="Kimata M."/>
            <person name="Watanabe M."/>
            <person name="Hiraoka S."/>
            <person name="Chiba Y."/>
            <person name="Ishida S."/>
            <person name="Ono Y."/>
            <person name="Takiguchi S."/>
            <person name="Watanabe S."/>
            <person name="Yosida M."/>
            <person name="Hotuta T."/>
            <person name="Kusano J."/>
            <person name="Kanehori K."/>
            <person name="Takahashi-Fujii A."/>
            <person name="Hara H."/>
            <person name="Tanase T.-O."/>
            <person name="Nomura Y."/>
            <person name="Togiya S."/>
            <person name="Komai F."/>
            <person name="Hara R."/>
            <person name="Takeuchi K."/>
            <person name="Arita M."/>
            <person name="Imose N."/>
            <person name="Musashino K."/>
            <person name="Yuuki H."/>
            <person name="Oshima A."/>
            <person name="Sasaki N."/>
            <person name="Aotsuka S."/>
            <person name="Yoshikawa Y."/>
            <person name="Matsunawa H."/>
            <person name="Ichihara T."/>
            <person name="Shiohata N."/>
            <person name="Sano S."/>
            <person name="Moriya S."/>
            <person name="Momiyama H."/>
            <person name="Satoh N."/>
            <person name="Takami S."/>
            <person name="Terashima Y."/>
            <person name="Suzuki O."/>
            <person name="Nakagawa S."/>
            <person name="Senoh A."/>
            <person name="Mizoguchi H."/>
            <person name="Goto Y."/>
            <person name="Shimizu F."/>
            <person name="Wakebe H."/>
            <person name="Hishigaki H."/>
            <person name="Watanabe T."/>
            <person name="Sugiyama A."/>
            <person name="Takemoto M."/>
            <person name="Kawakami B."/>
            <person name="Yamazaki M."/>
            <person name="Watanabe K."/>
            <person name="Kumagai A."/>
            <person name="Itakura S."/>
            <person name="Fukuzumi Y."/>
            <person name="Fujimori Y."/>
            <person name="Komiyama M."/>
            <person name="Tashiro H."/>
            <person name="Tanigami A."/>
            <person name="Fujiwara T."/>
            <person name="Ono T."/>
            <person name="Yamada K."/>
            <person name="Fujii Y."/>
            <person name="Ozaki K."/>
            <person name="Hirao M."/>
            <person name="Ohmori Y."/>
            <person name="Kawabata A."/>
            <person name="Hikiji T."/>
            <person name="Kobatake N."/>
            <person name="Inagaki H."/>
            <person name="Ikema Y."/>
            <person name="Okamoto S."/>
            <person name="Okitani R."/>
            <person name="Kawakami T."/>
            <person name="Noguchi S."/>
            <person name="Itoh T."/>
            <person name="Shigeta K."/>
            <person name="Senba T."/>
            <person name="Matsumura K."/>
            <person name="Nakajima Y."/>
            <person name="Mizuno T."/>
            <person name="Morinaga M."/>
            <person name="Sasaki M."/>
            <person name="Togashi T."/>
            <person name="Oyama M."/>
            <person name="Hata H."/>
            <person name="Watanabe M."/>
            <person name="Komatsu T."/>
            <person name="Mizushima-Sugano J."/>
            <person name="Satoh T."/>
            <person name="Shirai Y."/>
            <person name="Takahashi Y."/>
            <person name="Nakagawa K."/>
            <person name="Okumura K."/>
            <person name="Nagase T."/>
            <person name="Nomura N."/>
            <person name="Kikuchi H."/>
            <person name="Masuho Y."/>
            <person name="Yamashita R."/>
            <person name="Nakai K."/>
            <person name="Yada T."/>
            <person name="Nakamura Y."/>
            <person name="Ohara O."/>
            <person name="Isogai T."/>
            <person name="Sugano S."/>
        </authorList>
    </citation>
    <scope>NUCLEOTIDE SEQUENCE [LARGE SCALE MRNA] (ISOFORMS 2 AND 3)</scope>
    <source>
        <tissue>Colon</tissue>
        <tissue>Synovium</tissue>
    </source>
</reference>
<reference key="2">
    <citation type="journal article" date="2006" name="Nature">
        <title>DNA sequence of human chromosome 17 and analysis of rearrangement in the human lineage.</title>
        <authorList>
            <person name="Zody M.C."/>
            <person name="Garber M."/>
            <person name="Adams D.J."/>
            <person name="Sharpe T."/>
            <person name="Harrow J."/>
            <person name="Lupski J.R."/>
            <person name="Nicholson C."/>
            <person name="Searle S.M."/>
            <person name="Wilming L."/>
            <person name="Young S.K."/>
            <person name="Abouelleil A."/>
            <person name="Allen N.R."/>
            <person name="Bi W."/>
            <person name="Bloom T."/>
            <person name="Borowsky M.L."/>
            <person name="Bugalter B.E."/>
            <person name="Butler J."/>
            <person name="Chang J.L."/>
            <person name="Chen C.-K."/>
            <person name="Cook A."/>
            <person name="Corum B."/>
            <person name="Cuomo C.A."/>
            <person name="de Jong P.J."/>
            <person name="DeCaprio D."/>
            <person name="Dewar K."/>
            <person name="FitzGerald M."/>
            <person name="Gilbert J."/>
            <person name="Gibson R."/>
            <person name="Gnerre S."/>
            <person name="Goldstein S."/>
            <person name="Grafham D.V."/>
            <person name="Grocock R."/>
            <person name="Hafez N."/>
            <person name="Hagopian D.S."/>
            <person name="Hart E."/>
            <person name="Norman C.H."/>
            <person name="Humphray S."/>
            <person name="Jaffe D.B."/>
            <person name="Jones M."/>
            <person name="Kamal M."/>
            <person name="Khodiyar V.K."/>
            <person name="LaButti K."/>
            <person name="Laird G."/>
            <person name="Lehoczky J."/>
            <person name="Liu X."/>
            <person name="Lokyitsang T."/>
            <person name="Loveland J."/>
            <person name="Lui A."/>
            <person name="Macdonald P."/>
            <person name="Major J.E."/>
            <person name="Matthews L."/>
            <person name="Mauceli E."/>
            <person name="McCarroll S.A."/>
            <person name="Mihalev A.H."/>
            <person name="Mudge J."/>
            <person name="Nguyen C."/>
            <person name="Nicol R."/>
            <person name="O'Leary S.B."/>
            <person name="Osoegawa K."/>
            <person name="Schwartz D.C."/>
            <person name="Shaw-Smith C."/>
            <person name="Stankiewicz P."/>
            <person name="Steward C."/>
            <person name="Swarbreck D."/>
            <person name="Venkataraman V."/>
            <person name="Whittaker C.A."/>
            <person name="Yang X."/>
            <person name="Zimmer A.R."/>
            <person name="Bradley A."/>
            <person name="Hubbard T."/>
            <person name="Birren B.W."/>
            <person name="Rogers J."/>
            <person name="Lander E.S."/>
            <person name="Nusbaum C."/>
        </authorList>
    </citation>
    <scope>NUCLEOTIDE SEQUENCE [LARGE SCALE GENOMIC DNA]</scope>
</reference>
<reference key="3">
    <citation type="submission" date="2005-09" db="EMBL/GenBank/DDBJ databases">
        <authorList>
            <person name="Mural R.J."/>
            <person name="Istrail S."/>
            <person name="Sutton G.G."/>
            <person name="Florea L."/>
            <person name="Halpern A.L."/>
            <person name="Mobarry C.M."/>
            <person name="Lippert R."/>
            <person name="Walenz B."/>
            <person name="Shatkay H."/>
            <person name="Dew I."/>
            <person name="Miller J.R."/>
            <person name="Flanigan M.J."/>
            <person name="Edwards N.J."/>
            <person name="Bolanos R."/>
            <person name="Fasulo D."/>
            <person name="Halldorsson B.V."/>
            <person name="Hannenhalli S."/>
            <person name="Turner R."/>
            <person name="Yooseph S."/>
            <person name="Lu F."/>
            <person name="Nusskern D.R."/>
            <person name="Shue B.C."/>
            <person name="Zheng X.H."/>
            <person name="Zhong F."/>
            <person name="Delcher A.L."/>
            <person name="Huson D.H."/>
            <person name="Kravitz S.A."/>
            <person name="Mouchard L."/>
            <person name="Reinert K."/>
            <person name="Remington K.A."/>
            <person name="Clark A.G."/>
            <person name="Waterman M.S."/>
            <person name="Eichler E.E."/>
            <person name="Adams M.D."/>
            <person name="Hunkapiller M.W."/>
            <person name="Myers E.W."/>
            <person name="Venter J.C."/>
        </authorList>
    </citation>
    <scope>NUCLEOTIDE SEQUENCE [LARGE SCALE GENOMIC DNA]</scope>
</reference>
<reference key="4">
    <citation type="journal article" date="2004" name="Genome Res.">
        <title>The status, quality, and expansion of the NIH full-length cDNA project: the Mammalian Gene Collection (MGC).</title>
        <authorList>
            <consortium name="The MGC Project Team"/>
        </authorList>
    </citation>
    <scope>NUCLEOTIDE SEQUENCE [LARGE SCALE MRNA] (ISOFORM 3)</scope>
    <scope>NUCLEOTIDE SEQUENCE [LARGE SCALE MRNA] OF 1-577 (ISOFORM 1)</scope>
    <source>
        <tissue>Eye</tissue>
    </source>
</reference>
<reference key="5">
    <citation type="journal article" date="2014" name="Leuk. Lymphoma">
        <title>Recurrent translocation (10;17)(p15;q21) in acute poorly differentiated myeloid leukemia likely results in ZMYND11-MBTD1 fusion.</title>
        <authorList>
            <person name="De Braekeleer E."/>
            <person name="Auffret R."/>
            <person name="Douet-Guilbert N."/>
            <person name="Basinko A."/>
            <person name="Le Bris M.J."/>
            <person name="Morel F."/>
            <person name="De Braekeleer M."/>
        </authorList>
    </citation>
    <scope>CHROMOSOMAL TRANSLOCATION WITH ZMYND11</scope>
</reference>
<reference key="6">
    <citation type="journal article" date="2016" name="Mol. Cell">
        <title>The TIP60 complex regulates bivalent chromatin recognition by 53BP1 through direct H4K20me binding and H2AK15 acetylation.</title>
        <authorList>
            <person name="Jacquet K."/>
            <person name="Fradet-Turcotte A."/>
            <person name="Avvakumov N."/>
            <person name="Lambert J.P."/>
            <person name="Roques C."/>
            <person name="Pandita R.K."/>
            <person name="Paquet E."/>
            <person name="Herst P."/>
            <person name="Gingras A.C."/>
            <person name="Pandita T.K."/>
            <person name="Legube G."/>
            <person name="Doyon Y."/>
            <person name="Durocher D."/>
            <person name="Cote J."/>
        </authorList>
    </citation>
    <scope>FUNCTION</scope>
    <scope>SUBCELLULAR LOCATION</scope>
    <scope>IDENTIFICATION IN NUA4 COMPLEX</scope>
</reference>
<reference key="7">
    <citation type="journal article" date="2009" name="PLoS ONE">
        <title>Structural studies of a four-MBT repeat protein MBTD1.</title>
        <authorList>
            <person name="Eryilmaz J."/>
            <person name="Pan P."/>
            <person name="Amaya M.F."/>
            <person name="Allali-Hassani A."/>
            <person name="Dong A."/>
            <person name="Adams-Cioaba M.A."/>
            <person name="Mackenzie F."/>
            <person name="Vedadi M."/>
            <person name="Min J."/>
        </authorList>
    </citation>
    <scope>X-RAY CRYSTALLOGRAPHY (2.5 ANGSTROMS) OF 130-566</scope>
    <scope>SUBUNIT</scope>
    <scope>FUNCTION</scope>
</reference>
<reference evidence="14" key="8">
    <citation type="journal article" date="2020" name="Cell Rep.">
        <title>Structural basis for EPC1-mediated recruitment of MBTD1 into the NuA4/TIP60 acetyltransferase complex.</title>
        <authorList>
            <person name="Zhang H."/>
            <person name="Devoucoux M."/>
            <person name="Song X."/>
            <person name="Li L."/>
            <person name="Ayaz G."/>
            <person name="Cheng H."/>
            <person name="Tempel W."/>
            <person name="Dong C."/>
            <person name="Loppnau P."/>
            <person name="Cote J."/>
            <person name="Min J."/>
        </authorList>
    </citation>
    <scope>X-RAY CRYSTALLOGRAPHY (1.95 ANGSTROMS) OF 140-562 IN COMPLEX WITH EPC1</scope>
    <scope>FUNCTION</scope>
    <scope>IDENTIFICATION IN NUA4 COMPLEX</scope>
    <scope>INTERACTION WITH EPC1</scope>
    <scope>MUTAGENESIS OF ALA-236 AND 259-LEU--LEU-263</scope>
</reference>
<dbReference type="EMBL" id="AK000062">
    <property type="protein sequence ID" value="BAA90919.1"/>
    <property type="molecule type" value="mRNA"/>
</dbReference>
<dbReference type="EMBL" id="AK124061">
    <property type="protein sequence ID" value="BAC85763.1"/>
    <property type="status" value="ALT_SEQ"/>
    <property type="molecule type" value="mRNA"/>
</dbReference>
<dbReference type="EMBL" id="AC005839">
    <property type="status" value="NOT_ANNOTATED_CDS"/>
    <property type="molecule type" value="Genomic_DNA"/>
</dbReference>
<dbReference type="EMBL" id="AC006141">
    <property type="status" value="NOT_ANNOTATED_CDS"/>
    <property type="molecule type" value="Genomic_DNA"/>
</dbReference>
<dbReference type="EMBL" id="CH471109">
    <property type="protein sequence ID" value="EAW94562.1"/>
    <property type="molecule type" value="Genomic_DNA"/>
</dbReference>
<dbReference type="EMBL" id="BC034364">
    <property type="protein sequence ID" value="AAH34364.1"/>
    <property type="molecule type" value="mRNA"/>
</dbReference>
<dbReference type="EMBL" id="BC101736">
    <property type="protein sequence ID" value="AAI01737.1"/>
    <property type="molecule type" value="mRNA"/>
</dbReference>
<dbReference type="CCDS" id="CCDS11581.2">
    <molecule id="Q05BQ5-1"/>
</dbReference>
<dbReference type="RefSeq" id="NP_060113.2">
    <molecule id="Q05BQ5-1"/>
    <property type="nucleotide sequence ID" value="NM_017643.3"/>
</dbReference>
<dbReference type="RefSeq" id="XP_011523238.1">
    <property type="nucleotide sequence ID" value="XM_011524936.1"/>
</dbReference>
<dbReference type="PDB" id="3FEO">
    <property type="method" value="X-ray"/>
    <property type="resolution" value="2.50 A"/>
    <property type="chains" value="A/B=130-566"/>
</dbReference>
<dbReference type="PDB" id="4C5I">
    <property type="method" value="X-ray"/>
    <property type="resolution" value="2.59 A"/>
    <property type="chains" value="A/B=130-566"/>
</dbReference>
<dbReference type="PDB" id="6NFX">
    <property type="method" value="X-ray"/>
    <property type="resolution" value="1.95 A"/>
    <property type="chains" value="A=140-562"/>
</dbReference>
<dbReference type="PDBsum" id="3FEO"/>
<dbReference type="PDBsum" id="4C5I"/>
<dbReference type="PDBsum" id="6NFX"/>
<dbReference type="SMR" id="Q05BQ5"/>
<dbReference type="BioGRID" id="120158">
    <property type="interactions" value="63"/>
</dbReference>
<dbReference type="ComplexPortal" id="CPX-978">
    <property type="entry name" value="NuA4 histone acetyltransferase complex"/>
</dbReference>
<dbReference type="CORUM" id="Q05BQ5"/>
<dbReference type="FunCoup" id="Q05BQ5">
    <property type="interactions" value="2078"/>
</dbReference>
<dbReference type="IntAct" id="Q05BQ5">
    <property type="interactions" value="51"/>
</dbReference>
<dbReference type="MINT" id="Q05BQ5"/>
<dbReference type="STRING" id="9606.ENSP00000468304"/>
<dbReference type="BindingDB" id="Q05BQ5"/>
<dbReference type="ChEMBL" id="CHEMBL1287625"/>
<dbReference type="DrugCentral" id="Q05BQ5"/>
<dbReference type="iPTMnet" id="Q05BQ5"/>
<dbReference type="PhosphoSitePlus" id="Q05BQ5"/>
<dbReference type="BioMuta" id="MBTD1"/>
<dbReference type="DMDM" id="166232936"/>
<dbReference type="jPOST" id="Q05BQ5"/>
<dbReference type="MassIVE" id="Q05BQ5"/>
<dbReference type="PaxDb" id="9606-ENSP00000468304"/>
<dbReference type="PeptideAtlas" id="Q05BQ5"/>
<dbReference type="ProteomicsDB" id="58373">
    <molecule id="Q05BQ5-1"/>
</dbReference>
<dbReference type="ProteomicsDB" id="58374">
    <molecule id="Q05BQ5-2"/>
</dbReference>
<dbReference type="ProteomicsDB" id="58375">
    <molecule id="Q05BQ5-3"/>
</dbReference>
<dbReference type="Pumba" id="Q05BQ5"/>
<dbReference type="ABCD" id="Q05BQ5">
    <property type="antibodies" value="1 sequenced antibody"/>
</dbReference>
<dbReference type="Antibodypedia" id="18227">
    <property type="antibodies" value="107 antibodies from 21 providers"/>
</dbReference>
<dbReference type="DNASU" id="54799"/>
<dbReference type="Ensembl" id="ENST00000376381.3">
    <molecule id="Q05BQ5-3"/>
    <property type="protein sequence ID" value="ENSP00000365561.3"/>
    <property type="gene ID" value="ENSG00000011258.16"/>
</dbReference>
<dbReference type="Ensembl" id="ENST00000405860.7">
    <molecule id="Q05BQ5-2"/>
    <property type="protein sequence ID" value="ENSP00000386072.3"/>
    <property type="gene ID" value="ENSG00000011258.16"/>
</dbReference>
<dbReference type="Ensembl" id="ENST00000415868.5">
    <molecule id="Q05BQ5-1"/>
    <property type="protein sequence ID" value="ENSP00000403946.1"/>
    <property type="gene ID" value="ENSG00000011258.16"/>
</dbReference>
<dbReference type="Ensembl" id="ENST00000586178.6">
    <molecule id="Q05BQ5-1"/>
    <property type="protein sequence ID" value="ENSP00000468304.1"/>
    <property type="gene ID" value="ENSG00000011258.16"/>
</dbReference>
<dbReference type="GeneID" id="54799"/>
<dbReference type="KEGG" id="hsa:54799"/>
<dbReference type="MANE-Select" id="ENST00000586178.6">
    <property type="protein sequence ID" value="ENSP00000468304.1"/>
    <property type="RefSeq nucleotide sequence ID" value="NM_017643.3"/>
    <property type="RefSeq protein sequence ID" value="NP_060113.2"/>
</dbReference>
<dbReference type="UCSC" id="uc002itp.5">
    <molecule id="Q05BQ5-1"/>
    <property type="organism name" value="human"/>
</dbReference>
<dbReference type="AGR" id="HGNC:19866"/>
<dbReference type="CTD" id="54799"/>
<dbReference type="DisGeNET" id="54799"/>
<dbReference type="GeneCards" id="MBTD1"/>
<dbReference type="HGNC" id="HGNC:19866">
    <property type="gene designation" value="MBTD1"/>
</dbReference>
<dbReference type="HPA" id="ENSG00000011258">
    <property type="expression patterns" value="Low tissue specificity"/>
</dbReference>
<dbReference type="MIM" id="618705">
    <property type="type" value="gene"/>
</dbReference>
<dbReference type="neXtProt" id="NX_Q05BQ5"/>
<dbReference type="OpenTargets" id="ENSG00000011258"/>
<dbReference type="PharmGKB" id="PA134938339"/>
<dbReference type="VEuPathDB" id="HostDB:ENSG00000011258"/>
<dbReference type="eggNOG" id="KOG3766">
    <property type="taxonomic scope" value="Eukaryota"/>
</dbReference>
<dbReference type="GeneTree" id="ENSGT00940000153840"/>
<dbReference type="HOGENOM" id="CLU_005352_2_1_1"/>
<dbReference type="InParanoid" id="Q05BQ5"/>
<dbReference type="OMA" id="CAENGMP"/>
<dbReference type="OrthoDB" id="5800688at2759"/>
<dbReference type="PAN-GO" id="Q05BQ5">
    <property type="GO annotations" value="4 GO annotations based on evolutionary models"/>
</dbReference>
<dbReference type="PhylomeDB" id="Q05BQ5"/>
<dbReference type="PathwayCommons" id="Q05BQ5"/>
<dbReference type="SignaLink" id="Q05BQ5"/>
<dbReference type="SIGNOR" id="Q05BQ5"/>
<dbReference type="BioGRID-ORCS" id="54799">
    <property type="hits" value="135 hits in 1165 CRISPR screens"/>
</dbReference>
<dbReference type="ChiTaRS" id="MBTD1">
    <property type="organism name" value="human"/>
</dbReference>
<dbReference type="EvolutionaryTrace" id="Q05BQ5"/>
<dbReference type="GenomeRNAi" id="54799"/>
<dbReference type="Pharos" id="Q05BQ5">
    <property type="development level" value="Tbio"/>
</dbReference>
<dbReference type="PRO" id="PR:Q05BQ5"/>
<dbReference type="Proteomes" id="UP000005640">
    <property type="component" value="Chromosome 17"/>
</dbReference>
<dbReference type="RNAct" id="Q05BQ5">
    <property type="molecule type" value="protein"/>
</dbReference>
<dbReference type="Bgee" id="ENSG00000011258">
    <property type="expression patterns" value="Expressed in upper leg skin and 188 other cell types or tissues"/>
</dbReference>
<dbReference type="ExpressionAtlas" id="Q05BQ5">
    <property type="expression patterns" value="baseline and differential"/>
</dbReference>
<dbReference type="GO" id="GO:0035267">
    <property type="term" value="C:NuA4 histone acetyltransferase complex"/>
    <property type="evidence" value="ECO:0000314"/>
    <property type="project" value="UniProtKB"/>
</dbReference>
<dbReference type="GO" id="GO:0000786">
    <property type="term" value="C:nucleosome"/>
    <property type="evidence" value="ECO:0000314"/>
    <property type="project" value="ComplexPortal"/>
</dbReference>
<dbReference type="GO" id="GO:0005634">
    <property type="term" value="C:nucleus"/>
    <property type="evidence" value="ECO:0000318"/>
    <property type="project" value="GO_Central"/>
</dbReference>
<dbReference type="GO" id="GO:0035861">
    <property type="term" value="C:site of double-strand break"/>
    <property type="evidence" value="ECO:0000314"/>
    <property type="project" value="UniProt"/>
</dbReference>
<dbReference type="GO" id="GO:0003682">
    <property type="term" value="F:chromatin binding"/>
    <property type="evidence" value="ECO:0000318"/>
    <property type="project" value="GO_Central"/>
</dbReference>
<dbReference type="GO" id="GO:0140117">
    <property type="term" value="F:histone H4K20me1 reader activity"/>
    <property type="evidence" value="ECO:0000314"/>
    <property type="project" value="GO_Central"/>
</dbReference>
<dbReference type="GO" id="GO:0140005">
    <property type="term" value="F:histone H4K20me2 reader activity"/>
    <property type="evidence" value="ECO:0000314"/>
    <property type="project" value="UniProtKB"/>
</dbReference>
<dbReference type="GO" id="GO:0035064">
    <property type="term" value="F:methylated histone binding"/>
    <property type="evidence" value="ECO:0000314"/>
    <property type="project" value="UniProt"/>
</dbReference>
<dbReference type="GO" id="GO:0062060">
    <property type="term" value="F:NuA4 histone acetyltransferase complex binding"/>
    <property type="evidence" value="ECO:0000314"/>
    <property type="project" value="UniProt"/>
</dbReference>
<dbReference type="GO" id="GO:0008270">
    <property type="term" value="F:zinc ion binding"/>
    <property type="evidence" value="ECO:0007669"/>
    <property type="project" value="UniProtKB-KW"/>
</dbReference>
<dbReference type="GO" id="GO:0000724">
    <property type="term" value="P:double-strand break repair via homologous recombination"/>
    <property type="evidence" value="ECO:0000314"/>
    <property type="project" value="UniProtKB"/>
</dbReference>
<dbReference type="GO" id="GO:0048706">
    <property type="term" value="P:embryonic skeletal system development"/>
    <property type="evidence" value="ECO:0007669"/>
    <property type="project" value="Ensembl"/>
</dbReference>
<dbReference type="GO" id="GO:0045892">
    <property type="term" value="P:negative regulation of DNA-templated transcription"/>
    <property type="evidence" value="ECO:0000318"/>
    <property type="project" value="GO_Central"/>
</dbReference>
<dbReference type="GO" id="GO:0045893">
    <property type="term" value="P:positive regulation of DNA-templated transcription"/>
    <property type="evidence" value="ECO:0000303"/>
    <property type="project" value="ComplexPortal"/>
</dbReference>
<dbReference type="GO" id="GO:1905168">
    <property type="term" value="P:positive regulation of double-strand break repair via homologous recombination"/>
    <property type="evidence" value="ECO:0000314"/>
    <property type="project" value="ComplexPortal"/>
</dbReference>
<dbReference type="GO" id="GO:0042981">
    <property type="term" value="P:regulation of apoptotic process"/>
    <property type="evidence" value="ECO:0000303"/>
    <property type="project" value="ComplexPortal"/>
</dbReference>
<dbReference type="GO" id="GO:0051726">
    <property type="term" value="P:regulation of cell cycle"/>
    <property type="evidence" value="ECO:0000315"/>
    <property type="project" value="ComplexPortal"/>
</dbReference>
<dbReference type="GO" id="GO:2000779">
    <property type="term" value="P:regulation of double-strand break repair"/>
    <property type="evidence" value="ECO:0000303"/>
    <property type="project" value="ComplexPortal"/>
</dbReference>
<dbReference type="CDD" id="cd20120">
    <property type="entry name" value="MBT_MBTD1_rpt1"/>
    <property type="match status" value="1"/>
</dbReference>
<dbReference type="CDD" id="cd20123">
    <property type="entry name" value="MBT_MBTD1_rpt2"/>
    <property type="match status" value="1"/>
</dbReference>
<dbReference type="CDD" id="cd20126">
    <property type="entry name" value="MBT_MBTD1_rpt3"/>
    <property type="match status" value="1"/>
</dbReference>
<dbReference type="CDD" id="cd20129">
    <property type="entry name" value="MBT_MBTD1_rpt4"/>
    <property type="match status" value="1"/>
</dbReference>
<dbReference type="FunFam" id="2.30.30.140:FF:000010">
    <property type="entry name" value="MBT domain-containing protein 1 isoform X1"/>
    <property type="match status" value="1"/>
</dbReference>
<dbReference type="FunFam" id="2.30.30.140:FF:000015">
    <property type="entry name" value="MBT domain-containing protein 1 isoform X1"/>
    <property type="match status" value="1"/>
</dbReference>
<dbReference type="FunFam" id="2.30.30.140:FF:000019">
    <property type="entry name" value="MBT domain-containing protein 1 isoform X1"/>
    <property type="match status" value="1"/>
</dbReference>
<dbReference type="FunFam" id="2.30.30.140:FF:000032">
    <property type="entry name" value="MBT domain-containing protein 1 isoform X1"/>
    <property type="match status" value="1"/>
</dbReference>
<dbReference type="FunFam" id="3.30.60.160:FF:000001">
    <property type="entry name" value="MBT domain-containing protein 1 isoform X1"/>
    <property type="match status" value="1"/>
</dbReference>
<dbReference type="Gene3D" id="2.30.30.140">
    <property type="match status" value="4"/>
</dbReference>
<dbReference type="Gene3D" id="3.30.60.160">
    <property type="match status" value="1"/>
</dbReference>
<dbReference type="IDEAL" id="IID00562"/>
<dbReference type="InterPro" id="IPR004092">
    <property type="entry name" value="Mbt"/>
</dbReference>
<dbReference type="InterPro" id="IPR050548">
    <property type="entry name" value="PcG_chromatin_remod_factors"/>
</dbReference>
<dbReference type="InterPro" id="IPR012313">
    <property type="entry name" value="Znf_FCS"/>
</dbReference>
<dbReference type="InterPro" id="IPR038603">
    <property type="entry name" value="Znf_FCS_sf"/>
</dbReference>
<dbReference type="PANTHER" id="PTHR12247:SF79">
    <property type="entry name" value="MBT DOMAIN-CONTAINING PROTEIN 1"/>
    <property type="match status" value="1"/>
</dbReference>
<dbReference type="PANTHER" id="PTHR12247">
    <property type="entry name" value="POLYCOMB GROUP PROTEIN"/>
    <property type="match status" value="1"/>
</dbReference>
<dbReference type="Pfam" id="PF02820">
    <property type="entry name" value="MBT"/>
    <property type="match status" value="4"/>
</dbReference>
<dbReference type="Pfam" id="PF21319">
    <property type="entry name" value="zf-FCS_1"/>
    <property type="match status" value="1"/>
</dbReference>
<dbReference type="SMART" id="SM00561">
    <property type="entry name" value="MBT"/>
    <property type="match status" value="4"/>
</dbReference>
<dbReference type="SUPFAM" id="SSF63748">
    <property type="entry name" value="Tudor/PWWP/MBT"/>
    <property type="match status" value="4"/>
</dbReference>
<dbReference type="PROSITE" id="PS51079">
    <property type="entry name" value="MBT"/>
    <property type="match status" value="4"/>
</dbReference>
<dbReference type="PROSITE" id="PS51024">
    <property type="entry name" value="ZF_FCS"/>
    <property type="match status" value="1"/>
</dbReference>
<sequence>MFDGYDSCSEDTSSSSSSEESEEEVAPLPSNLPIIKNNGQVYTYPDGKSGMATCEMCGMVGVRDAFYSKTKRFCSVSCSRSYSSNSKKASILARLQGKPPTKKAKVLQKQPLVAKLAAYAQYQATLQNQAKTKAAVSMEGFSWGNYINSNSFIAAPVTCFKHAPMGTCWGDISENVRVEVPNTDCSLPTKVFWIAGIVKLAGYNALLRYEGFENDSGLDFWCNICGSDIHPVGWCAASGKPLVPPRTIQHKYTNWKAFLVKRLTGAKTLPPDFSQKVSESMQYPFKPCMRVEVVDKRHLCRTRVAVVESVIGGRLRLVYEESEDRTDDFWCHMHSPLIHHIGWSRSIGHRFKRSDITKKQDGHFDTPPHLFAKVKEVDQSGEWFKEGMKLEAIDPLNLSTICVATIRKVLADGFLMIGIDGSEAADGSDWFCYHATSPSIFPVGFCEINMIELTPPRGYTKLPFKWFDYLRETGSIAAPVKLFNKDVPNHGFRVGMKLEAVDLMEPRLICVATVTRIIHRLLRIHFDGWEEEYDQWVDCESPDLYPVGWCQLTGYQLQPPASQSSRENQSASSKQKKKAKSQQYKGHKKMTTLQLKEELLDGEDYNFLQGASDQESNGSANFYIKQEP</sequence>
<organism>
    <name type="scientific">Homo sapiens</name>
    <name type="common">Human</name>
    <dbReference type="NCBI Taxonomy" id="9606"/>
    <lineage>
        <taxon>Eukaryota</taxon>
        <taxon>Metazoa</taxon>
        <taxon>Chordata</taxon>
        <taxon>Craniata</taxon>
        <taxon>Vertebrata</taxon>
        <taxon>Euteleostomi</taxon>
        <taxon>Mammalia</taxon>
        <taxon>Eutheria</taxon>
        <taxon>Euarchontoglires</taxon>
        <taxon>Primates</taxon>
        <taxon>Haplorrhini</taxon>
        <taxon>Catarrhini</taxon>
        <taxon>Hominidae</taxon>
        <taxon>Homo</taxon>
    </lineage>
</organism>
<proteinExistence type="evidence at protein level"/>
<protein>
    <recommendedName>
        <fullName evidence="11">MBT domain-containing protein 1</fullName>
    </recommendedName>
</protein>
<feature type="chain" id="PRO_0000313717" description="MBT domain-containing protein 1">
    <location>
        <begin position="1"/>
        <end position="628"/>
    </location>
</feature>
<feature type="repeat" description="MBT 1">
    <location>
        <begin position="141"/>
        <end position="245"/>
    </location>
</feature>
<feature type="repeat" description="MBT 2">
    <location>
        <begin position="253"/>
        <end position="350"/>
    </location>
</feature>
<feature type="repeat" description="MBT 3">
    <location>
        <begin position="351"/>
        <end position="456"/>
    </location>
</feature>
<feature type="repeat" description="MBT 4">
    <location>
        <begin position="464"/>
        <end position="560"/>
    </location>
</feature>
<feature type="zinc finger region" description="FCS-type" evidence="2">
    <location>
        <begin position="45"/>
        <end position="80"/>
    </location>
</feature>
<feature type="region of interest" description="Disordered" evidence="3">
    <location>
        <begin position="1"/>
        <end position="31"/>
    </location>
</feature>
<feature type="region of interest" description="Disordered" evidence="3">
    <location>
        <begin position="560"/>
        <end position="590"/>
    </location>
</feature>
<feature type="region of interest" description="Disordered" evidence="3">
    <location>
        <begin position="606"/>
        <end position="628"/>
    </location>
</feature>
<feature type="compositionally biased region" description="Low complexity" evidence="3">
    <location>
        <begin position="562"/>
        <end position="573"/>
    </location>
</feature>
<feature type="compositionally biased region" description="Basic residues" evidence="3">
    <location>
        <begin position="574"/>
        <end position="590"/>
    </location>
</feature>
<feature type="compositionally biased region" description="Polar residues" evidence="3">
    <location>
        <begin position="609"/>
        <end position="620"/>
    </location>
</feature>
<feature type="binding site" evidence="2">
    <location>
        <position position="54"/>
    </location>
    <ligand>
        <name>Zn(2+)</name>
        <dbReference type="ChEBI" id="CHEBI:29105"/>
    </ligand>
</feature>
<feature type="binding site" evidence="2">
    <location>
        <position position="57"/>
    </location>
    <ligand>
        <name>Zn(2+)</name>
        <dbReference type="ChEBI" id="CHEBI:29105"/>
    </ligand>
</feature>
<feature type="binding site" evidence="2">
    <location>
        <position position="74"/>
    </location>
    <ligand>
        <name>Zn(2+)</name>
        <dbReference type="ChEBI" id="CHEBI:29105"/>
    </ligand>
</feature>
<feature type="binding site" evidence="2">
    <location>
        <position position="78"/>
    </location>
    <ligand>
        <name>Zn(2+)</name>
        <dbReference type="ChEBI" id="CHEBI:29105"/>
    </ligand>
</feature>
<feature type="modified residue" description="N6-acetyllysine" evidence="1">
    <location>
        <position position="115"/>
    </location>
</feature>
<feature type="splice variant" id="VSP_030115" description="In isoform 3." evidence="8 9">
    <location>
        <begin position="1"/>
        <end position="164"/>
    </location>
</feature>
<feature type="splice variant" id="VSP_042701" description="In isoform 2." evidence="8">
    <original>APMGTCW</original>
    <variation>GRRVAPR</variation>
    <location>
        <begin position="163"/>
        <end position="169"/>
    </location>
</feature>
<feature type="splice variant" id="VSP_042702" description="In isoform 2." evidence="8">
    <location>
        <begin position="170"/>
        <end position="628"/>
    </location>
</feature>
<feature type="splice variant" id="VSP_030118" description="In isoform 3." evidence="8 9">
    <original>SSRENQSASSKQKKKAKSQQYKGHKKMTTLQLKEELLDGEDYNFLQGASDQESNGSANFYIKQEP</original>
    <variation>CKLVYRKGVLL</variation>
    <location>
        <begin position="564"/>
        <end position="628"/>
    </location>
</feature>
<feature type="mutagenesis site" description="Impaired interaction with EPC1; when associated with 259-D--D-263." evidence="7">
    <original>A</original>
    <variation>D</variation>
    <location>
        <position position="236"/>
    </location>
</feature>
<feature type="mutagenesis site" description="Impaired interaction with EPC1. Abolished interaction with EPC1; when associated with 259-G--G-263." evidence="7">
    <original>A</original>
    <variation>G</variation>
    <location>
        <position position="236"/>
    </location>
</feature>
<feature type="mutagenesis site" description="Impaired interaction with EPC1; when associated with D-236." evidence="7">
    <original>LVKRL</original>
    <variation>DVKRD</variation>
    <location>
        <begin position="259"/>
        <end position="263"/>
    </location>
</feature>
<feature type="mutagenesis site" description="Impaired interaction with EPC1. Abolished interaction with EPC1; when associated with G-236." evidence="7">
    <original>LVKRL</original>
    <variation>GVKRG</variation>
    <location>
        <begin position="259"/>
        <end position="263"/>
    </location>
</feature>
<feature type="sequence conflict" description="In Ref. 4; AAH34364." evidence="11" ref="4">
    <original>Q</original>
    <variation>K</variation>
    <location>
        <position position="575"/>
    </location>
</feature>
<feature type="helix" evidence="17">
    <location>
        <begin position="143"/>
        <end position="150"/>
    </location>
</feature>
<feature type="helix" evidence="17">
    <location>
        <begin position="157"/>
        <end position="159"/>
    </location>
</feature>
<feature type="helix" evidence="17">
    <location>
        <begin position="166"/>
        <end position="168"/>
    </location>
</feature>
<feature type="strand" evidence="17">
    <location>
        <begin position="177"/>
        <end position="181"/>
    </location>
</feature>
<feature type="strand" evidence="16">
    <location>
        <begin position="187"/>
        <end position="189"/>
    </location>
</feature>
<feature type="strand" evidence="17">
    <location>
        <begin position="192"/>
        <end position="201"/>
    </location>
</feature>
<feature type="strand" evidence="17">
    <location>
        <begin position="204"/>
        <end position="209"/>
    </location>
</feature>
<feature type="strand" evidence="17">
    <location>
        <begin position="220"/>
        <end position="223"/>
    </location>
</feature>
<feature type="helix" evidence="17">
    <location>
        <begin position="234"/>
        <end position="238"/>
    </location>
</feature>
<feature type="helix" evidence="17">
    <location>
        <begin position="246"/>
        <end position="248"/>
    </location>
</feature>
<feature type="turn" evidence="17">
    <location>
        <begin position="249"/>
        <end position="251"/>
    </location>
</feature>
<feature type="helix" evidence="17">
    <location>
        <begin position="255"/>
        <end position="263"/>
    </location>
</feature>
<feature type="helix" evidence="17">
    <location>
        <begin position="273"/>
        <end position="280"/>
    </location>
</feature>
<feature type="strand" evidence="17">
    <location>
        <begin position="289"/>
        <end position="295"/>
    </location>
</feature>
<feature type="strand" evidence="17">
    <location>
        <begin position="298"/>
        <end position="311"/>
    </location>
</feature>
<feature type="strand" evidence="17">
    <location>
        <begin position="314"/>
        <end position="319"/>
    </location>
</feature>
<feature type="strand" evidence="17">
    <location>
        <begin position="323"/>
        <end position="326"/>
    </location>
</feature>
<feature type="strand" evidence="17">
    <location>
        <begin position="329"/>
        <end position="332"/>
    </location>
</feature>
<feature type="helix" evidence="17">
    <location>
        <begin position="343"/>
        <end position="347"/>
    </location>
</feature>
<feature type="helix" evidence="17">
    <location>
        <begin position="368"/>
        <end position="370"/>
    </location>
</feature>
<feature type="strand" evidence="15">
    <location>
        <begin position="380"/>
        <end position="382"/>
    </location>
</feature>
<feature type="strand" evidence="17">
    <location>
        <begin position="389"/>
        <end position="394"/>
    </location>
</feature>
<feature type="strand" evidence="17">
    <location>
        <begin position="397"/>
        <end position="409"/>
    </location>
</feature>
<feature type="helix" evidence="17">
    <location>
        <begin position="411"/>
        <end position="413"/>
    </location>
</feature>
<feature type="strand" evidence="17">
    <location>
        <begin position="414"/>
        <end position="419"/>
    </location>
</feature>
<feature type="strand" evidence="17">
    <location>
        <begin position="431"/>
        <end position="434"/>
    </location>
</feature>
<feature type="helix" evidence="17">
    <location>
        <begin position="445"/>
        <end position="448"/>
    </location>
</feature>
<feature type="strand" evidence="15">
    <location>
        <begin position="461"/>
        <end position="463"/>
    </location>
</feature>
<feature type="helix" evidence="17">
    <location>
        <begin position="466"/>
        <end position="473"/>
    </location>
</feature>
<feature type="helix" evidence="17">
    <location>
        <begin position="480"/>
        <end position="483"/>
    </location>
</feature>
<feature type="strand" evidence="17">
    <location>
        <begin position="497"/>
        <end position="501"/>
    </location>
</feature>
<feature type="strand" evidence="17">
    <location>
        <begin position="509"/>
        <end position="518"/>
    </location>
</feature>
<feature type="strand" evidence="17">
    <location>
        <begin position="521"/>
        <end position="526"/>
    </location>
</feature>
<feature type="helix" evidence="17">
    <location>
        <begin position="531"/>
        <end position="533"/>
    </location>
</feature>
<feature type="strand" evidence="17">
    <location>
        <begin position="535"/>
        <end position="538"/>
    </location>
</feature>
<feature type="helix" evidence="17">
    <location>
        <begin position="549"/>
        <end position="553"/>
    </location>
</feature>
<name>MBTD1_HUMAN</name>
<keyword id="KW-0002">3D-structure</keyword>
<keyword id="KW-0007">Acetylation</keyword>
<keyword id="KW-0025">Alternative splicing</keyword>
<keyword id="KW-0156">Chromatin regulator</keyword>
<keyword id="KW-0160">Chromosomal rearrangement</keyword>
<keyword id="KW-0158">Chromosome</keyword>
<keyword id="KW-0479">Metal-binding</keyword>
<keyword id="KW-0539">Nucleus</keyword>
<keyword id="KW-1267">Proteomics identification</keyword>
<keyword id="KW-1185">Reference proteome</keyword>
<keyword id="KW-0677">Repeat</keyword>
<keyword id="KW-0804">Transcription</keyword>
<keyword id="KW-0805">Transcription regulation</keyword>
<keyword id="KW-0862">Zinc</keyword>
<keyword id="KW-0863">Zinc-finger</keyword>
<evidence type="ECO:0000250" key="1">
    <source>
        <dbReference type="UniProtKB" id="Q6P5G3"/>
    </source>
</evidence>
<evidence type="ECO:0000255" key="2">
    <source>
        <dbReference type="PROSITE-ProRule" id="PRU00367"/>
    </source>
</evidence>
<evidence type="ECO:0000256" key="3">
    <source>
        <dbReference type="SAM" id="MobiDB-lite"/>
    </source>
</evidence>
<evidence type="ECO:0000269" key="4">
    <source>
    </source>
</evidence>
<evidence type="ECO:0000269" key="5">
    <source>
    </source>
</evidence>
<evidence type="ECO:0000269" key="6">
    <source>
    </source>
</evidence>
<evidence type="ECO:0000269" key="7">
    <source>
    </source>
</evidence>
<evidence type="ECO:0000303" key="8">
    <source>
    </source>
</evidence>
<evidence type="ECO:0000303" key="9">
    <source>
    </source>
</evidence>
<evidence type="ECO:0000303" key="10">
    <source>
    </source>
</evidence>
<evidence type="ECO:0000305" key="11"/>
<evidence type="ECO:0000305" key="12">
    <source>
    </source>
</evidence>
<evidence type="ECO:0000312" key="13">
    <source>
        <dbReference type="HGNC" id="HGNC:19866"/>
    </source>
</evidence>
<evidence type="ECO:0007744" key="14">
    <source>
        <dbReference type="PDB" id="6NFX"/>
    </source>
</evidence>
<evidence type="ECO:0007829" key="15">
    <source>
        <dbReference type="PDB" id="3FEO"/>
    </source>
</evidence>
<evidence type="ECO:0007829" key="16">
    <source>
        <dbReference type="PDB" id="4C5I"/>
    </source>
</evidence>
<evidence type="ECO:0007829" key="17">
    <source>
        <dbReference type="PDB" id="6NFX"/>
    </source>
</evidence>